<proteinExistence type="inferred from homology"/>
<name>PLSX_BACLD</name>
<protein>
    <recommendedName>
        <fullName evidence="1">Phosphate acyltransferase</fullName>
        <ecNumber evidence="1">2.3.1.274</ecNumber>
    </recommendedName>
    <alternativeName>
        <fullName evidence="1">Acyl-ACP phosphotransacylase</fullName>
    </alternativeName>
    <alternativeName>
        <fullName evidence="1">Acyl-[acyl-carrier-protein]--phosphate acyltransferase</fullName>
    </alternativeName>
    <alternativeName>
        <fullName evidence="1">Phosphate-acyl-ACP acyltransferase</fullName>
    </alternativeName>
</protein>
<comment type="function">
    <text evidence="1">Catalyzes the reversible formation of acyl-phosphate (acyl-PO(4)) from acyl-[acyl-carrier-protein] (acyl-ACP). This enzyme utilizes acyl-ACP as fatty acyl donor, but not acyl-CoA.</text>
</comment>
<comment type="catalytic activity">
    <reaction evidence="1">
        <text>a fatty acyl-[ACP] + phosphate = an acyl phosphate + holo-[ACP]</text>
        <dbReference type="Rhea" id="RHEA:42292"/>
        <dbReference type="Rhea" id="RHEA-COMP:9685"/>
        <dbReference type="Rhea" id="RHEA-COMP:14125"/>
        <dbReference type="ChEBI" id="CHEBI:43474"/>
        <dbReference type="ChEBI" id="CHEBI:59918"/>
        <dbReference type="ChEBI" id="CHEBI:64479"/>
        <dbReference type="ChEBI" id="CHEBI:138651"/>
        <dbReference type="EC" id="2.3.1.274"/>
    </reaction>
</comment>
<comment type="pathway">
    <text evidence="1">Lipid metabolism; phospholipid metabolism.</text>
</comment>
<comment type="subunit">
    <text evidence="1">Homodimer. Probably interacts with PlsY.</text>
</comment>
<comment type="subcellular location">
    <subcellularLocation>
        <location evidence="1">Cytoplasm</location>
    </subcellularLocation>
    <text evidence="1">Associated with the membrane possibly through PlsY.</text>
</comment>
<comment type="similarity">
    <text evidence="1">Belongs to the PlsX family.</text>
</comment>
<keyword id="KW-0963">Cytoplasm</keyword>
<keyword id="KW-0444">Lipid biosynthesis</keyword>
<keyword id="KW-0443">Lipid metabolism</keyword>
<keyword id="KW-0594">Phospholipid biosynthesis</keyword>
<keyword id="KW-1208">Phospholipid metabolism</keyword>
<keyword id="KW-1185">Reference proteome</keyword>
<keyword id="KW-0808">Transferase</keyword>
<dbReference type="EC" id="2.3.1.274" evidence="1"/>
<dbReference type="EMBL" id="AE017333">
    <property type="protein sequence ID" value="AAU40705.1"/>
    <property type="molecule type" value="Genomic_DNA"/>
</dbReference>
<dbReference type="EMBL" id="CP000002">
    <property type="protein sequence ID" value="AAU23345.1"/>
    <property type="molecule type" value="Genomic_DNA"/>
</dbReference>
<dbReference type="RefSeq" id="WP_003181700.1">
    <property type="nucleotide sequence ID" value="NC_006322.1"/>
</dbReference>
<dbReference type="SMR" id="Q65JQ9"/>
<dbReference type="STRING" id="279010.BL02313"/>
<dbReference type="GeneID" id="92861597"/>
<dbReference type="KEGG" id="bld:BLi01810"/>
<dbReference type="KEGG" id="bli:BL02313"/>
<dbReference type="eggNOG" id="COG0416">
    <property type="taxonomic scope" value="Bacteria"/>
</dbReference>
<dbReference type="HOGENOM" id="CLU_039379_1_1_9"/>
<dbReference type="UniPathway" id="UPA00085"/>
<dbReference type="Proteomes" id="UP000000606">
    <property type="component" value="Chromosome"/>
</dbReference>
<dbReference type="GO" id="GO:0005737">
    <property type="term" value="C:cytoplasm"/>
    <property type="evidence" value="ECO:0007669"/>
    <property type="project" value="UniProtKB-SubCell"/>
</dbReference>
<dbReference type="GO" id="GO:0043811">
    <property type="term" value="F:phosphate:acyl-[acyl carrier protein] acyltransferase activity"/>
    <property type="evidence" value="ECO:0007669"/>
    <property type="project" value="UniProtKB-UniRule"/>
</dbReference>
<dbReference type="GO" id="GO:0006633">
    <property type="term" value="P:fatty acid biosynthetic process"/>
    <property type="evidence" value="ECO:0007669"/>
    <property type="project" value="UniProtKB-UniRule"/>
</dbReference>
<dbReference type="GO" id="GO:0008654">
    <property type="term" value="P:phospholipid biosynthetic process"/>
    <property type="evidence" value="ECO:0007669"/>
    <property type="project" value="UniProtKB-KW"/>
</dbReference>
<dbReference type="Gene3D" id="3.40.718.10">
    <property type="entry name" value="Isopropylmalate Dehydrogenase"/>
    <property type="match status" value="1"/>
</dbReference>
<dbReference type="HAMAP" id="MF_00019">
    <property type="entry name" value="PlsX"/>
    <property type="match status" value="1"/>
</dbReference>
<dbReference type="InterPro" id="IPR003664">
    <property type="entry name" value="FA_synthesis"/>
</dbReference>
<dbReference type="InterPro" id="IPR012281">
    <property type="entry name" value="Phospholipid_synth_PlsX-like"/>
</dbReference>
<dbReference type="NCBIfam" id="TIGR00182">
    <property type="entry name" value="plsX"/>
    <property type="match status" value="1"/>
</dbReference>
<dbReference type="PANTHER" id="PTHR30100">
    <property type="entry name" value="FATTY ACID/PHOSPHOLIPID SYNTHESIS PROTEIN PLSX"/>
    <property type="match status" value="1"/>
</dbReference>
<dbReference type="PANTHER" id="PTHR30100:SF1">
    <property type="entry name" value="PHOSPHATE ACYLTRANSFERASE"/>
    <property type="match status" value="1"/>
</dbReference>
<dbReference type="Pfam" id="PF02504">
    <property type="entry name" value="FA_synthesis"/>
    <property type="match status" value="1"/>
</dbReference>
<dbReference type="PIRSF" id="PIRSF002465">
    <property type="entry name" value="Phsphlp_syn_PlsX"/>
    <property type="match status" value="1"/>
</dbReference>
<dbReference type="SUPFAM" id="SSF53659">
    <property type="entry name" value="Isocitrate/Isopropylmalate dehydrogenase-like"/>
    <property type="match status" value="1"/>
</dbReference>
<reference key="1">
    <citation type="journal article" date="2004" name="J. Mol. Microbiol. Biotechnol.">
        <title>The complete genome sequence of Bacillus licheniformis DSM13, an organism with great industrial potential.</title>
        <authorList>
            <person name="Veith B."/>
            <person name="Herzberg C."/>
            <person name="Steckel S."/>
            <person name="Feesche J."/>
            <person name="Maurer K.H."/>
            <person name="Ehrenreich P."/>
            <person name="Baeumer S."/>
            <person name="Henne A."/>
            <person name="Liesegang H."/>
            <person name="Merkl R."/>
            <person name="Ehrenreich A."/>
            <person name="Gottschalk G."/>
        </authorList>
    </citation>
    <scope>NUCLEOTIDE SEQUENCE [LARGE SCALE GENOMIC DNA]</scope>
    <source>
        <strain>ATCC 14580 / DSM 13 / JCM 2505 / CCUG 7422 / NBRC 12200 / NCIMB 9375 / NCTC 10341 / NRRL NRS-1264 / Gibson 46</strain>
    </source>
</reference>
<reference key="2">
    <citation type="journal article" date="2004" name="Genome Biol.">
        <title>Complete genome sequence of the industrial bacterium Bacillus licheniformis and comparisons with closely related Bacillus species.</title>
        <authorList>
            <person name="Rey M.W."/>
            <person name="Ramaiya P."/>
            <person name="Nelson B.A."/>
            <person name="Brody-Karpin S.D."/>
            <person name="Zaretsky E.J."/>
            <person name="Tang M."/>
            <person name="Lopez de Leon A."/>
            <person name="Xiang H."/>
            <person name="Gusti V."/>
            <person name="Clausen I.G."/>
            <person name="Olsen P.B."/>
            <person name="Rasmussen M.D."/>
            <person name="Andersen J.T."/>
            <person name="Joergensen P.L."/>
            <person name="Larsen T.S."/>
            <person name="Sorokin A."/>
            <person name="Bolotin A."/>
            <person name="Lapidus A."/>
            <person name="Galleron N."/>
            <person name="Ehrlich S.D."/>
            <person name="Berka R.M."/>
        </authorList>
    </citation>
    <scope>NUCLEOTIDE SEQUENCE [LARGE SCALE GENOMIC DNA]</scope>
    <source>
        <strain>ATCC 14580 / DSM 13 / JCM 2505 / CCUG 7422 / NBRC 12200 / NCIMB 9375 / NCTC 10341 / NRRL NRS-1264 / Gibson 46</strain>
    </source>
</reference>
<sequence length="330" mass="35252">MKIAVDAMGGDNAPKAVIEGVMKAVEDFEDLEITLIGDREKIAAHLTEHGRITVKHAEEVIEATDEPVRAVRRKKNSSMVLMAGEVAEGRADACISAGNTGALMTAGLFIVGRIEGIERPALAPTLPTVSGDGFLLLDVGANVDAKPEHLVQYAIMGSVYGEQVLGVKNPRIGLLNVGTEDKKGNELAKQTFQKLKETDLNFIGNVEARDMLDGVADVIVTDGFTGNVALKTVEGAALSIFKMLRTTLTSSFTAKLAASALKPKLKEMKTKMDYSEYGGAGLFGLKAPVIKAHGSSDGRAVYHAIRQAREMVSQNVAAFIEEKIQQKADE</sequence>
<evidence type="ECO:0000255" key="1">
    <source>
        <dbReference type="HAMAP-Rule" id="MF_00019"/>
    </source>
</evidence>
<accession>Q65JQ9</accession>
<accession>Q62V64</accession>
<gene>
    <name evidence="1" type="primary">plsX</name>
    <name type="ordered locus">BLi01810</name>
    <name type="ordered locus">BL02313</name>
</gene>
<organism>
    <name type="scientific">Bacillus licheniformis (strain ATCC 14580 / DSM 13 / JCM 2505 / CCUG 7422 / NBRC 12200 / NCIMB 9375 / NCTC 10341 / NRRL NRS-1264 / Gibson 46)</name>
    <dbReference type="NCBI Taxonomy" id="279010"/>
    <lineage>
        <taxon>Bacteria</taxon>
        <taxon>Bacillati</taxon>
        <taxon>Bacillota</taxon>
        <taxon>Bacilli</taxon>
        <taxon>Bacillales</taxon>
        <taxon>Bacillaceae</taxon>
        <taxon>Bacillus</taxon>
    </lineage>
</organism>
<feature type="chain" id="PRO_0000189845" description="Phosphate acyltransferase">
    <location>
        <begin position="1"/>
        <end position="330"/>
    </location>
</feature>